<accession>Q3JZ37</accession>
<keyword id="KW-0030">Aminoacyl-tRNA synthetase</keyword>
<keyword id="KW-0067">ATP-binding</keyword>
<keyword id="KW-0963">Cytoplasm</keyword>
<keyword id="KW-0436">Ligase</keyword>
<keyword id="KW-0547">Nucleotide-binding</keyword>
<keyword id="KW-0648">Protein biosynthesis</keyword>
<sequence length="617" mass="68997">MKQSKMLIPTLREMPSDAQVISHALMVRAGYVRQVSAGIYAYLPLANRTIEKFKTIMRQEFEKIGAVEMLAPALLTADLWRESGRYETYGEDLYKLKNRDQSDFILGPTHEETFTTLVRDAVKSYKQLPLNLYQIQSKYRDEKRPRNGLLRTREFIMKDGYSFHKDYEDLDVTYEDYRKAYEAIFTRAGLDFKGIIGDGGAMGGKDSQEFMAVTPNRTDLNRWLVLDKTIPSIDDIPEDVLEEIKAELSAWLVSGEDTIAYSTESSYAANLEMATNEYKPSTKAATFEEVTKVETPNCKSIDEVAGFLSIDKNQTIKTLLFIADEQPVVALLVGNDQVNDVKLKNYLAADFLEPASEEQAKEIFGAGFGSLGPVNLPESVKIIADRKVQDLANAVSGANQDGYHFTGVNPERDFTAEYVDIREVKEGEISPDGKGTLKFSRGIEIGHIFKLGTRYSDSMGANILDENGRSNPIVMGCYGIGVSRILSAVIEQHARLFVNKTPKGAYRFAWGINFPEELAPFDVHLITVNVKDQESQDLTEKIEADLMLKGYEVLTDDRNERVGSKFSDSDLIGLPIRVTVGKKASEGIVEVKIKASGDTIEVHADNLIETLEILTKK</sequence>
<dbReference type="EC" id="6.1.1.15" evidence="1"/>
<dbReference type="EMBL" id="CP000114">
    <property type="protein sequence ID" value="ABA46079.1"/>
    <property type="status" value="ALT_INIT"/>
    <property type="molecule type" value="Genomic_DNA"/>
</dbReference>
<dbReference type="SMR" id="Q3JZ37"/>
<dbReference type="KEGG" id="sak:SAK_1871"/>
<dbReference type="HOGENOM" id="CLU_016739_0_0_9"/>
<dbReference type="GO" id="GO:0005829">
    <property type="term" value="C:cytosol"/>
    <property type="evidence" value="ECO:0007669"/>
    <property type="project" value="TreeGrafter"/>
</dbReference>
<dbReference type="GO" id="GO:0002161">
    <property type="term" value="F:aminoacyl-tRNA deacylase activity"/>
    <property type="evidence" value="ECO:0007669"/>
    <property type="project" value="InterPro"/>
</dbReference>
<dbReference type="GO" id="GO:0005524">
    <property type="term" value="F:ATP binding"/>
    <property type="evidence" value="ECO:0007669"/>
    <property type="project" value="UniProtKB-UniRule"/>
</dbReference>
<dbReference type="GO" id="GO:0140096">
    <property type="term" value="F:catalytic activity, acting on a protein"/>
    <property type="evidence" value="ECO:0007669"/>
    <property type="project" value="UniProtKB-ARBA"/>
</dbReference>
<dbReference type="GO" id="GO:0004827">
    <property type="term" value="F:proline-tRNA ligase activity"/>
    <property type="evidence" value="ECO:0007669"/>
    <property type="project" value="UniProtKB-UniRule"/>
</dbReference>
<dbReference type="GO" id="GO:0016740">
    <property type="term" value="F:transferase activity"/>
    <property type="evidence" value="ECO:0007669"/>
    <property type="project" value="UniProtKB-ARBA"/>
</dbReference>
<dbReference type="GO" id="GO:0006433">
    <property type="term" value="P:prolyl-tRNA aminoacylation"/>
    <property type="evidence" value="ECO:0007669"/>
    <property type="project" value="UniProtKB-UniRule"/>
</dbReference>
<dbReference type="CDD" id="cd04334">
    <property type="entry name" value="ProRS-INS"/>
    <property type="match status" value="1"/>
</dbReference>
<dbReference type="CDD" id="cd00861">
    <property type="entry name" value="ProRS_anticodon_short"/>
    <property type="match status" value="1"/>
</dbReference>
<dbReference type="FunFam" id="3.40.50.800:FF:000011">
    <property type="entry name" value="Proline--tRNA ligase"/>
    <property type="match status" value="1"/>
</dbReference>
<dbReference type="Gene3D" id="3.40.50.800">
    <property type="entry name" value="Anticodon-binding domain"/>
    <property type="match status" value="1"/>
</dbReference>
<dbReference type="Gene3D" id="3.30.930.10">
    <property type="entry name" value="Bira Bifunctional Protein, Domain 2"/>
    <property type="match status" value="2"/>
</dbReference>
<dbReference type="Gene3D" id="3.90.960.10">
    <property type="entry name" value="YbaK/aminoacyl-tRNA synthetase-associated domain"/>
    <property type="match status" value="1"/>
</dbReference>
<dbReference type="HAMAP" id="MF_01569">
    <property type="entry name" value="Pro_tRNA_synth_type1"/>
    <property type="match status" value="1"/>
</dbReference>
<dbReference type="InterPro" id="IPR002314">
    <property type="entry name" value="aa-tRNA-synt_IIb"/>
</dbReference>
<dbReference type="InterPro" id="IPR006195">
    <property type="entry name" value="aa-tRNA-synth_II"/>
</dbReference>
<dbReference type="InterPro" id="IPR045864">
    <property type="entry name" value="aa-tRNA-synth_II/BPL/LPL"/>
</dbReference>
<dbReference type="InterPro" id="IPR004154">
    <property type="entry name" value="Anticodon-bd"/>
</dbReference>
<dbReference type="InterPro" id="IPR036621">
    <property type="entry name" value="Anticodon-bd_dom_sf"/>
</dbReference>
<dbReference type="InterPro" id="IPR002316">
    <property type="entry name" value="Pro-tRNA-ligase_IIa"/>
</dbReference>
<dbReference type="InterPro" id="IPR004500">
    <property type="entry name" value="Pro-tRNA-synth_IIa_bac-type"/>
</dbReference>
<dbReference type="InterPro" id="IPR023717">
    <property type="entry name" value="Pro-tRNA-Synthase_IIa_type1"/>
</dbReference>
<dbReference type="InterPro" id="IPR050062">
    <property type="entry name" value="Pro-tRNA_synthetase"/>
</dbReference>
<dbReference type="InterPro" id="IPR044140">
    <property type="entry name" value="ProRS_anticodon_short"/>
</dbReference>
<dbReference type="InterPro" id="IPR036754">
    <property type="entry name" value="YbaK/aa-tRNA-synt-asso_dom_sf"/>
</dbReference>
<dbReference type="InterPro" id="IPR007214">
    <property type="entry name" value="YbaK/aa-tRNA-synth-assoc-dom"/>
</dbReference>
<dbReference type="NCBIfam" id="NF006625">
    <property type="entry name" value="PRK09194.1"/>
    <property type="match status" value="1"/>
</dbReference>
<dbReference type="NCBIfam" id="TIGR00409">
    <property type="entry name" value="proS_fam_II"/>
    <property type="match status" value="2"/>
</dbReference>
<dbReference type="PANTHER" id="PTHR42753">
    <property type="entry name" value="MITOCHONDRIAL RIBOSOME PROTEIN L39/PROLYL-TRNA LIGASE FAMILY MEMBER"/>
    <property type="match status" value="1"/>
</dbReference>
<dbReference type="PANTHER" id="PTHR42753:SF2">
    <property type="entry name" value="PROLINE--TRNA LIGASE"/>
    <property type="match status" value="1"/>
</dbReference>
<dbReference type="Pfam" id="PF03129">
    <property type="entry name" value="HGTP_anticodon"/>
    <property type="match status" value="1"/>
</dbReference>
<dbReference type="Pfam" id="PF00587">
    <property type="entry name" value="tRNA-synt_2b"/>
    <property type="match status" value="1"/>
</dbReference>
<dbReference type="Pfam" id="PF04073">
    <property type="entry name" value="tRNA_edit"/>
    <property type="match status" value="1"/>
</dbReference>
<dbReference type="PRINTS" id="PR01046">
    <property type="entry name" value="TRNASYNTHPRO"/>
</dbReference>
<dbReference type="SUPFAM" id="SSF52954">
    <property type="entry name" value="Class II aaRS ABD-related"/>
    <property type="match status" value="1"/>
</dbReference>
<dbReference type="SUPFAM" id="SSF55681">
    <property type="entry name" value="Class II aaRS and biotin synthetases"/>
    <property type="match status" value="1"/>
</dbReference>
<dbReference type="SUPFAM" id="SSF55826">
    <property type="entry name" value="YbaK/ProRS associated domain"/>
    <property type="match status" value="1"/>
</dbReference>
<dbReference type="PROSITE" id="PS50862">
    <property type="entry name" value="AA_TRNA_LIGASE_II"/>
    <property type="match status" value="1"/>
</dbReference>
<name>SYP_STRA1</name>
<protein>
    <recommendedName>
        <fullName evidence="1">Proline--tRNA ligase</fullName>
        <ecNumber evidence="1">6.1.1.15</ecNumber>
    </recommendedName>
    <alternativeName>
        <fullName evidence="1">Prolyl-tRNA synthetase</fullName>
        <shortName evidence="1">ProRS</shortName>
    </alternativeName>
</protein>
<organism>
    <name type="scientific">Streptococcus agalactiae serotype Ia (strain ATCC 27591 / A909 / CDC SS700)</name>
    <dbReference type="NCBI Taxonomy" id="205921"/>
    <lineage>
        <taxon>Bacteria</taxon>
        <taxon>Bacillati</taxon>
        <taxon>Bacillota</taxon>
        <taxon>Bacilli</taxon>
        <taxon>Lactobacillales</taxon>
        <taxon>Streptococcaceae</taxon>
        <taxon>Streptococcus</taxon>
    </lineage>
</organism>
<gene>
    <name evidence="1" type="primary">proS</name>
    <name type="ordered locus">SAK_1871</name>
</gene>
<proteinExistence type="inferred from homology"/>
<reference key="1">
    <citation type="journal article" date="2005" name="Proc. Natl. Acad. Sci. U.S.A.">
        <title>Genome analysis of multiple pathogenic isolates of Streptococcus agalactiae: implications for the microbial 'pan-genome'.</title>
        <authorList>
            <person name="Tettelin H."/>
            <person name="Masignani V."/>
            <person name="Cieslewicz M.J."/>
            <person name="Donati C."/>
            <person name="Medini D."/>
            <person name="Ward N.L."/>
            <person name="Angiuoli S.V."/>
            <person name="Crabtree J."/>
            <person name="Jones A.L."/>
            <person name="Durkin A.S."/>
            <person name="DeBoy R.T."/>
            <person name="Davidsen T.M."/>
            <person name="Mora M."/>
            <person name="Scarselli M."/>
            <person name="Margarit y Ros I."/>
            <person name="Peterson J.D."/>
            <person name="Hauser C.R."/>
            <person name="Sundaram J.P."/>
            <person name="Nelson W.C."/>
            <person name="Madupu R."/>
            <person name="Brinkac L.M."/>
            <person name="Dodson R.J."/>
            <person name="Rosovitz M.J."/>
            <person name="Sullivan S.A."/>
            <person name="Daugherty S.C."/>
            <person name="Haft D.H."/>
            <person name="Selengut J."/>
            <person name="Gwinn M.L."/>
            <person name="Zhou L."/>
            <person name="Zafar N."/>
            <person name="Khouri H."/>
            <person name="Radune D."/>
            <person name="Dimitrov G."/>
            <person name="Watkins K."/>
            <person name="O'Connor K.J."/>
            <person name="Smith S."/>
            <person name="Utterback T.R."/>
            <person name="White O."/>
            <person name="Rubens C.E."/>
            <person name="Grandi G."/>
            <person name="Madoff L.C."/>
            <person name="Kasper D.L."/>
            <person name="Telford J.L."/>
            <person name="Wessels M.R."/>
            <person name="Rappuoli R."/>
            <person name="Fraser C.M."/>
        </authorList>
    </citation>
    <scope>NUCLEOTIDE SEQUENCE [LARGE SCALE GENOMIC DNA]</scope>
    <source>
        <strain>ATCC 27591 / A909 / CDC SS700</strain>
    </source>
</reference>
<evidence type="ECO:0000255" key="1">
    <source>
        <dbReference type="HAMAP-Rule" id="MF_01569"/>
    </source>
</evidence>
<evidence type="ECO:0000305" key="2"/>
<feature type="chain" id="PRO_0000248773" description="Proline--tRNA ligase">
    <location>
        <begin position="1"/>
        <end position="617"/>
    </location>
</feature>
<comment type="function">
    <text evidence="1">Catalyzes the attachment of proline to tRNA(Pro) in a two-step reaction: proline is first activated by ATP to form Pro-AMP and then transferred to the acceptor end of tRNA(Pro). As ProRS can inadvertently accommodate and process non-cognate amino acids such as alanine and cysteine, to avoid such errors it has two additional distinct editing activities against alanine. One activity is designated as 'pretransfer' editing and involves the tRNA(Pro)-independent hydrolysis of activated Ala-AMP. The other activity is designated 'posttransfer' editing and involves deacylation of mischarged Ala-tRNA(Pro). The misacylated Cys-tRNA(Pro) is not edited by ProRS.</text>
</comment>
<comment type="catalytic activity">
    <reaction evidence="1">
        <text>tRNA(Pro) + L-proline + ATP = L-prolyl-tRNA(Pro) + AMP + diphosphate</text>
        <dbReference type="Rhea" id="RHEA:14305"/>
        <dbReference type="Rhea" id="RHEA-COMP:9700"/>
        <dbReference type="Rhea" id="RHEA-COMP:9702"/>
        <dbReference type="ChEBI" id="CHEBI:30616"/>
        <dbReference type="ChEBI" id="CHEBI:33019"/>
        <dbReference type="ChEBI" id="CHEBI:60039"/>
        <dbReference type="ChEBI" id="CHEBI:78442"/>
        <dbReference type="ChEBI" id="CHEBI:78532"/>
        <dbReference type="ChEBI" id="CHEBI:456215"/>
        <dbReference type="EC" id="6.1.1.15"/>
    </reaction>
</comment>
<comment type="subunit">
    <text evidence="1">Homodimer.</text>
</comment>
<comment type="subcellular location">
    <subcellularLocation>
        <location evidence="1">Cytoplasm</location>
    </subcellularLocation>
</comment>
<comment type="domain">
    <text evidence="1">Consists of three domains: the N-terminal catalytic domain, the editing domain and the C-terminal anticodon-binding domain.</text>
</comment>
<comment type="similarity">
    <text evidence="1">Belongs to the class-II aminoacyl-tRNA synthetase family. ProS type 1 subfamily.</text>
</comment>
<comment type="sequence caution" evidence="2">
    <conflict type="erroneous initiation">
        <sequence resource="EMBL-CDS" id="ABA46079"/>
    </conflict>
</comment>